<gene>
    <name evidence="1" type="primary">dnaA</name>
    <name type="ordered locus">Shewana3_0009</name>
</gene>
<organism>
    <name type="scientific">Shewanella sp. (strain ANA-3)</name>
    <dbReference type="NCBI Taxonomy" id="94122"/>
    <lineage>
        <taxon>Bacteria</taxon>
        <taxon>Pseudomonadati</taxon>
        <taxon>Pseudomonadota</taxon>
        <taxon>Gammaproteobacteria</taxon>
        <taxon>Alteromonadales</taxon>
        <taxon>Shewanellaceae</taxon>
        <taxon>Shewanella</taxon>
    </lineage>
</organism>
<reference key="1">
    <citation type="submission" date="2006-09" db="EMBL/GenBank/DDBJ databases">
        <title>Complete sequence of chromosome 1 of Shewanella sp. ANA-3.</title>
        <authorList>
            <person name="Copeland A."/>
            <person name="Lucas S."/>
            <person name="Lapidus A."/>
            <person name="Barry K."/>
            <person name="Detter J.C."/>
            <person name="Glavina del Rio T."/>
            <person name="Hammon N."/>
            <person name="Israni S."/>
            <person name="Dalin E."/>
            <person name="Tice H."/>
            <person name="Pitluck S."/>
            <person name="Chertkov O."/>
            <person name="Brettin T."/>
            <person name="Bruce D."/>
            <person name="Han C."/>
            <person name="Tapia R."/>
            <person name="Gilna P."/>
            <person name="Schmutz J."/>
            <person name="Larimer F."/>
            <person name="Land M."/>
            <person name="Hauser L."/>
            <person name="Kyrpides N."/>
            <person name="Kim E."/>
            <person name="Newman D."/>
            <person name="Salticov C."/>
            <person name="Konstantinidis K."/>
            <person name="Klappenback J."/>
            <person name="Tiedje J."/>
            <person name="Richardson P."/>
        </authorList>
    </citation>
    <scope>NUCLEOTIDE SEQUENCE [LARGE SCALE GENOMIC DNA]</scope>
    <source>
        <strain>ANA-3</strain>
    </source>
</reference>
<sequence>MAVSLWQQCIGRLQDELSAQQFSMWIRPLQAEMDGDTLVLYAPNRFVLDWVRDKYINIINQFFTEQMGNDAPKLRFDIGSRPSAKKPEPAPVAAVRVPNPQTKASVGTSFNTTEPVANANHRSNINPTYQFDNFVEGKSNQLGKAAALQVAENPGGAYNPLFLYGGTGLGKTHLLHAVGNGIIKNNPDAKVVYMHSERFVQDMVKALQNNAIEEFKRYYRSVDALFIDDIQFFANKDRSQEEFFHTFNALLEGNHQIILTSDRYPKEIDGVEDRLKSRFGWGLTVAIEPPELETRVAILMRKAQESGINLPDEVAFFIAKRLRSNVRELEGALNRVIANANFTGRPITIDFVREALRDLLALQEKLVTIDNIQKTVAEYYKIKMADMLSKRRSRSVARPRQVAMALSKELTNQSLPEIGDAFGGRDHTTVLHACRKIAQLREESHDIKEDYANLIRTLSS</sequence>
<accession>A0KR35</accession>
<proteinExistence type="inferred from homology"/>
<comment type="function">
    <text evidence="1">Plays an essential role in the initiation and regulation of chromosomal replication. ATP-DnaA binds to the origin of replication (oriC) to initiate formation of the DNA replication initiation complex once per cell cycle. Binds the DnaA box (a 9 base pair repeat at the origin) and separates the double-stranded (ds)DNA. Forms a right-handed helical filament on oriC DNA; dsDNA binds to the exterior of the filament while single-stranded (ss)DNA is stabiized in the filament's interior. The ATP-DnaA-oriC complex binds and stabilizes one strand of the AT-rich DNA unwinding element (DUE), permitting loading of DNA polymerase. After initiation quickly degrades to an ADP-DnaA complex that is not apt for DNA replication. Binds acidic phospholipids.</text>
</comment>
<comment type="subunit">
    <text evidence="1">Oligomerizes as a right-handed, spiral filament on DNA at oriC.</text>
</comment>
<comment type="subcellular location">
    <subcellularLocation>
        <location evidence="1">Cytoplasm</location>
    </subcellularLocation>
</comment>
<comment type="domain">
    <text evidence="1">Domain I is involved in oligomerization and binding regulators, domain II is flexibile and of varying length in different bacteria, domain III forms the AAA+ region, while domain IV binds dsDNA.</text>
</comment>
<comment type="similarity">
    <text evidence="1">Belongs to the DnaA family.</text>
</comment>
<evidence type="ECO:0000255" key="1">
    <source>
        <dbReference type="HAMAP-Rule" id="MF_00377"/>
    </source>
</evidence>
<dbReference type="EMBL" id="CP000469">
    <property type="protein sequence ID" value="ABK46254.1"/>
    <property type="molecule type" value="Genomic_DNA"/>
</dbReference>
<dbReference type="RefSeq" id="WP_011715304.1">
    <property type="nucleotide sequence ID" value="NC_008577.1"/>
</dbReference>
<dbReference type="SMR" id="A0KR35"/>
<dbReference type="STRING" id="94122.Shewana3_0009"/>
<dbReference type="GeneID" id="94725977"/>
<dbReference type="KEGG" id="shn:Shewana3_0009"/>
<dbReference type="eggNOG" id="COG0593">
    <property type="taxonomic scope" value="Bacteria"/>
</dbReference>
<dbReference type="HOGENOM" id="CLU_026910_0_1_6"/>
<dbReference type="OrthoDB" id="9807019at2"/>
<dbReference type="Proteomes" id="UP000002589">
    <property type="component" value="Chromosome"/>
</dbReference>
<dbReference type="GO" id="GO:0005737">
    <property type="term" value="C:cytoplasm"/>
    <property type="evidence" value="ECO:0007669"/>
    <property type="project" value="UniProtKB-SubCell"/>
</dbReference>
<dbReference type="GO" id="GO:0005886">
    <property type="term" value="C:plasma membrane"/>
    <property type="evidence" value="ECO:0007669"/>
    <property type="project" value="TreeGrafter"/>
</dbReference>
<dbReference type="GO" id="GO:0005524">
    <property type="term" value="F:ATP binding"/>
    <property type="evidence" value="ECO:0007669"/>
    <property type="project" value="UniProtKB-UniRule"/>
</dbReference>
<dbReference type="GO" id="GO:0016887">
    <property type="term" value="F:ATP hydrolysis activity"/>
    <property type="evidence" value="ECO:0007669"/>
    <property type="project" value="InterPro"/>
</dbReference>
<dbReference type="GO" id="GO:0003688">
    <property type="term" value="F:DNA replication origin binding"/>
    <property type="evidence" value="ECO:0007669"/>
    <property type="project" value="UniProtKB-UniRule"/>
</dbReference>
<dbReference type="GO" id="GO:0008289">
    <property type="term" value="F:lipid binding"/>
    <property type="evidence" value="ECO:0007669"/>
    <property type="project" value="UniProtKB-KW"/>
</dbReference>
<dbReference type="GO" id="GO:0006270">
    <property type="term" value="P:DNA replication initiation"/>
    <property type="evidence" value="ECO:0007669"/>
    <property type="project" value="UniProtKB-UniRule"/>
</dbReference>
<dbReference type="GO" id="GO:0006275">
    <property type="term" value="P:regulation of DNA replication"/>
    <property type="evidence" value="ECO:0007669"/>
    <property type="project" value="UniProtKB-UniRule"/>
</dbReference>
<dbReference type="CDD" id="cd00009">
    <property type="entry name" value="AAA"/>
    <property type="match status" value="1"/>
</dbReference>
<dbReference type="CDD" id="cd06571">
    <property type="entry name" value="Bac_DnaA_C"/>
    <property type="match status" value="1"/>
</dbReference>
<dbReference type="FunFam" id="1.10.1750.10:FF:000001">
    <property type="entry name" value="Chromosomal replication initiator protein DnaA"/>
    <property type="match status" value="1"/>
</dbReference>
<dbReference type="FunFam" id="1.10.8.60:FF:000003">
    <property type="entry name" value="Chromosomal replication initiator protein DnaA"/>
    <property type="match status" value="1"/>
</dbReference>
<dbReference type="FunFam" id="3.30.300.180:FF:000001">
    <property type="entry name" value="Chromosomal replication initiator protein DnaA"/>
    <property type="match status" value="1"/>
</dbReference>
<dbReference type="FunFam" id="3.40.50.300:FF:000103">
    <property type="entry name" value="Chromosomal replication initiator protein DnaA"/>
    <property type="match status" value="1"/>
</dbReference>
<dbReference type="Gene3D" id="1.10.1750.10">
    <property type="match status" value="1"/>
</dbReference>
<dbReference type="Gene3D" id="1.10.8.60">
    <property type="match status" value="1"/>
</dbReference>
<dbReference type="Gene3D" id="3.30.300.180">
    <property type="match status" value="1"/>
</dbReference>
<dbReference type="Gene3D" id="3.40.50.300">
    <property type="entry name" value="P-loop containing nucleotide triphosphate hydrolases"/>
    <property type="match status" value="1"/>
</dbReference>
<dbReference type="HAMAP" id="MF_00377">
    <property type="entry name" value="DnaA_bact"/>
    <property type="match status" value="1"/>
</dbReference>
<dbReference type="InterPro" id="IPR003593">
    <property type="entry name" value="AAA+_ATPase"/>
</dbReference>
<dbReference type="InterPro" id="IPR001957">
    <property type="entry name" value="Chromosome_initiator_DnaA"/>
</dbReference>
<dbReference type="InterPro" id="IPR020591">
    <property type="entry name" value="Chromosome_initiator_DnaA-like"/>
</dbReference>
<dbReference type="InterPro" id="IPR018312">
    <property type="entry name" value="Chromosome_initiator_DnaA_CS"/>
</dbReference>
<dbReference type="InterPro" id="IPR013159">
    <property type="entry name" value="DnaA_C"/>
</dbReference>
<dbReference type="InterPro" id="IPR013317">
    <property type="entry name" value="DnaA_dom"/>
</dbReference>
<dbReference type="InterPro" id="IPR024633">
    <property type="entry name" value="DnaA_N_dom"/>
</dbReference>
<dbReference type="InterPro" id="IPR038454">
    <property type="entry name" value="DnaA_N_sf"/>
</dbReference>
<dbReference type="InterPro" id="IPR055199">
    <property type="entry name" value="Hda_lid"/>
</dbReference>
<dbReference type="InterPro" id="IPR027417">
    <property type="entry name" value="P-loop_NTPase"/>
</dbReference>
<dbReference type="InterPro" id="IPR010921">
    <property type="entry name" value="Trp_repressor/repl_initiator"/>
</dbReference>
<dbReference type="NCBIfam" id="TIGR00362">
    <property type="entry name" value="DnaA"/>
    <property type="match status" value="1"/>
</dbReference>
<dbReference type="PANTHER" id="PTHR30050">
    <property type="entry name" value="CHROMOSOMAL REPLICATION INITIATOR PROTEIN DNAA"/>
    <property type="match status" value="1"/>
</dbReference>
<dbReference type="PANTHER" id="PTHR30050:SF2">
    <property type="entry name" value="CHROMOSOMAL REPLICATION INITIATOR PROTEIN DNAA"/>
    <property type="match status" value="1"/>
</dbReference>
<dbReference type="Pfam" id="PF00308">
    <property type="entry name" value="Bac_DnaA"/>
    <property type="match status" value="1"/>
</dbReference>
<dbReference type="Pfam" id="PF08299">
    <property type="entry name" value="Bac_DnaA_C"/>
    <property type="match status" value="1"/>
</dbReference>
<dbReference type="Pfam" id="PF11638">
    <property type="entry name" value="DnaA_N"/>
    <property type="match status" value="1"/>
</dbReference>
<dbReference type="Pfam" id="PF22688">
    <property type="entry name" value="Hda_lid"/>
    <property type="match status" value="1"/>
</dbReference>
<dbReference type="PRINTS" id="PR00051">
    <property type="entry name" value="DNAA"/>
</dbReference>
<dbReference type="SMART" id="SM00382">
    <property type="entry name" value="AAA"/>
    <property type="match status" value="1"/>
</dbReference>
<dbReference type="SMART" id="SM00760">
    <property type="entry name" value="Bac_DnaA_C"/>
    <property type="match status" value="1"/>
</dbReference>
<dbReference type="SUPFAM" id="SSF52540">
    <property type="entry name" value="P-loop containing nucleoside triphosphate hydrolases"/>
    <property type="match status" value="1"/>
</dbReference>
<dbReference type="SUPFAM" id="SSF48295">
    <property type="entry name" value="TrpR-like"/>
    <property type="match status" value="1"/>
</dbReference>
<dbReference type="PROSITE" id="PS01008">
    <property type="entry name" value="DNAA"/>
    <property type="match status" value="1"/>
</dbReference>
<name>DNAA_SHESA</name>
<feature type="chain" id="PRO_1000048722" description="Chromosomal replication initiator protein DnaA">
    <location>
        <begin position="1"/>
        <end position="460"/>
    </location>
</feature>
<feature type="region of interest" description="Domain I, interacts with DnaA modulators" evidence="1">
    <location>
        <begin position="1"/>
        <end position="84"/>
    </location>
</feature>
<feature type="region of interest" description="Domain II" evidence="1">
    <location>
        <begin position="84"/>
        <end position="123"/>
    </location>
</feature>
<feature type="region of interest" description="Domain III, AAA+ region" evidence="1">
    <location>
        <begin position="124"/>
        <end position="340"/>
    </location>
</feature>
<feature type="region of interest" description="Domain IV, binds dsDNA" evidence="1">
    <location>
        <begin position="341"/>
        <end position="460"/>
    </location>
</feature>
<feature type="binding site" evidence="1">
    <location>
        <position position="168"/>
    </location>
    <ligand>
        <name>ATP</name>
        <dbReference type="ChEBI" id="CHEBI:30616"/>
    </ligand>
</feature>
<feature type="binding site" evidence="1">
    <location>
        <position position="170"/>
    </location>
    <ligand>
        <name>ATP</name>
        <dbReference type="ChEBI" id="CHEBI:30616"/>
    </ligand>
</feature>
<feature type="binding site" evidence="1">
    <location>
        <position position="171"/>
    </location>
    <ligand>
        <name>ATP</name>
        <dbReference type="ChEBI" id="CHEBI:30616"/>
    </ligand>
</feature>
<feature type="binding site" evidence="1">
    <location>
        <position position="172"/>
    </location>
    <ligand>
        <name>ATP</name>
        <dbReference type="ChEBI" id="CHEBI:30616"/>
    </ligand>
</feature>
<protein>
    <recommendedName>
        <fullName evidence="1">Chromosomal replication initiator protein DnaA</fullName>
    </recommendedName>
</protein>
<keyword id="KW-0067">ATP-binding</keyword>
<keyword id="KW-0963">Cytoplasm</keyword>
<keyword id="KW-0235">DNA replication</keyword>
<keyword id="KW-0238">DNA-binding</keyword>
<keyword id="KW-0446">Lipid-binding</keyword>
<keyword id="KW-0547">Nucleotide-binding</keyword>